<name>Y2476_STRGG</name>
<evidence type="ECO:0000255" key="1">
    <source>
        <dbReference type="HAMAP-Rule" id="MF_01204"/>
    </source>
</evidence>
<accession>B1W2E1</accession>
<proteinExistence type="inferred from homology"/>
<keyword id="KW-0285">Flavoprotein</keyword>
<keyword id="KW-0288">FMN</keyword>
<keyword id="KW-0520">NAD</keyword>
<keyword id="KW-0521">NADP</keyword>
<keyword id="KW-0560">Oxidoreductase</keyword>
<sequence length="196" mass="21386">MSLVLDPAAQDLLFREARTANTFTDEPVTDEQVQAIYDLVKFGPTAFNQSPLRVVLVRSAEGRERLVQHMAEGNRPKTATAPLVAILAADNEFHEELPALLPHFPQAKDLFFSERPVRESAAGLNAALQAAYFIIGVRAAGLAAGPMTGYDAAGIQKEFLDDDHTPLMVVNIGKPGDDAWFPRSPRLSFDEVITTV</sequence>
<feature type="chain" id="PRO_1000138702" description="Putative NADH dehydrogenase/NAD(P)H nitroreductase SGR_2476">
    <location>
        <begin position="1"/>
        <end position="196"/>
    </location>
</feature>
<reference key="1">
    <citation type="journal article" date="2008" name="J. Bacteriol.">
        <title>Genome sequence of the streptomycin-producing microorganism Streptomyces griseus IFO 13350.</title>
        <authorList>
            <person name="Ohnishi Y."/>
            <person name="Ishikawa J."/>
            <person name="Hara H."/>
            <person name="Suzuki H."/>
            <person name="Ikenoya M."/>
            <person name="Ikeda H."/>
            <person name="Yamashita A."/>
            <person name="Hattori M."/>
            <person name="Horinouchi S."/>
        </authorList>
    </citation>
    <scope>NUCLEOTIDE SEQUENCE [LARGE SCALE GENOMIC DNA]</scope>
    <source>
        <strain>JCM 4626 / CBS 651.72 / NBRC 13350 / KCC S-0626 / ISP 5235</strain>
    </source>
</reference>
<dbReference type="EC" id="1.-.-.-" evidence="1"/>
<dbReference type="EMBL" id="AP009493">
    <property type="protein sequence ID" value="BAG19305.1"/>
    <property type="molecule type" value="Genomic_DNA"/>
</dbReference>
<dbReference type="RefSeq" id="WP_012379228.1">
    <property type="nucleotide sequence ID" value="NC_010572.1"/>
</dbReference>
<dbReference type="SMR" id="B1W2E1"/>
<dbReference type="KEGG" id="sgr:SGR_2476"/>
<dbReference type="PATRIC" id="fig|455632.4.peg.2520"/>
<dbReference type="eggNOG" id="COG0778">
    <property type="taxonomic scope" value="Bacteria"/>
</dbReference>
<dbReference type="HOGENOM" id="CLU_084441_0_0_11"/>
<dbReference type="Proteomes" id="UP000001685">
    <property type="component" value="Chromosome"/>
</dbReference>
<dbReference type="GO" id="GO:0016491">
    <property type="term" value="F:oxidoreductase activity"/>
    <property type="evidence" value="ECO:0007669"/>
    <property type="project" value="UniProtKB-UniRule"/>
</dbReference>
<dbReference type="CDD" id="cd02148">
    <property type="entry name" value="RutE-like"/>
    <property type="match status" value="1"/>
</dbReference>
<dbReference type="Gene3D" id="3.40.109.10">
    <property type="entry name" value="NADH Oxidase"/>
    <property type="match status" value="1"/>
</dbReference>
<dbReference type="HAMAP" id="MF_01204">
    <property type="entry name" value="Oxidoreductase_RutE_HadB"/>
    <property type="match status" value="1"/>
</dbReference>
<dbReference type="InterPro" id="IPR029479">
    <property type="entry name" value="Nitroreductase"/>
</dbReference>
<dbReference type="InterPro" id="IPR000415">
    <property type="entry name" value="Nitroreductase-like"/>
</dbReference>
<dbReference type="InterPro" id="IPR050461">
    <property type="entry name" value="Nitroreductase_HadB/RutE"/>
</dbReference>
<dbReference type="InterPro" id="IPR023936">
    <property type="entry name" value="RutE-like"/>
</dbReference>
<dbReference type="NCBIfam" id="NF003768">
    <property type="entry name" value="PRK05365.1"/>
    <property type="match status" value="1"/>
</dbReference>
<dbReference type="PANTHER" id="PTHR43543">
    <property type="entry name" value="MALONIC SEMIALDEHYDE REDUCTASE RUTE-RELATED"/>
    <property type="match status" value="1"/>
</dbReference>
<dbReference type="PANTHER" id="PTHR43543:SF1">
    <property type="entry name" value="MALONIC SEMIALDEHYDE REDUCTASE RUTE-RELATED"/>
    <property type="match status" value="1"/>
</dbReference>
<dbReference type="Pfam" id="PF00881">
    <property type="entry name" value="Nitroreductase"/>
    <property type="match status" value="1"/>
</dbReference>
<dbReference type="SUPFAM" id="SSF55469">
    <property type="entry name" value="FMN-dependent nitroreductase-like"/>
    <property type="match status" value="1"/>
</dbReference>
<organism>
    <name type="scientific">Streptomyces griseus subsp. griseus (strain JCM 4626 / CBS 651.72 / NBRC 13350 / KCC S-0626 / ISP 5235)</name>
    <dbReference type="NCBI Taxonomy" id="455632"/>
    <lineage>
        <taxon>Bacteria</taxon>
        <taxon>Bacillati</taxon>
        <taxon>Actinomycetota</taxon>
        <taxon>Actinomycetes</taxon>
        <taxon>Kitasatosporales</taxon>
        <taxon>Streptomycetaceae</taxon>
        <taxon>Streptomyces</taxon>
    </lineage>
</organism>
<comment type="cofactor">
    <cofactor evidence="1">
        <name>FMN</name>
        <dbReference type="ChEBI" id="CHEBI:58210"/>
    </cofactor>
</comment>
<comment type="similarity">
    <text evidence="1">Belongs to the nitroreductase family. HadB/RutE subfamily.</text>
</comment>
<gene>
    <name type="ordered locus">SGR_2476</name>
</gene>
<protein>
    <recommendedName>
        <fullName evidence="1">Putative NADH dehydrogenase/NAD(P)H nitroreductase SGR_2476</fullName>
        <ecNumber evidence="1">1.-.-.-</ecNumber>
    </recommendedName>
</protein>